<organism>
    <name type="scientific">Bacillus subtilis (strain 168)</name>
    <dbReference type="NCBI Taxonomy" id="224308"/>
    <lineage>
        <taxon>Bacteria</taxon>
        <taxon>Bacillati</taxon>
        <taxon>Bacillota</taxon>
        <taxon>Bacilli</taxon>
        <taxon>Bacillales</taxon>
        <taxon>Bacillaceae</taxon>
        <taxon>Bacillus</taxon>
    </lineage>
</organism>
<dbReference type="EMBL" id="AL009126">
    <property type="protein sequence ID" value="CAB13822.1"/>
    <property type="molecule type" value="Genomic_DNA"/>
</dbReference>
<dbReference type="PIR" id="G69930">
    <property type="entry name" value="G69930"/>
</dbReference>
<dbReference type="RefSeq" id="NP_389812.1">
    <property type="nucleotide sequence ID" value="NC_000964.3"/>
</dbReference>
<dbReference type="RefSeq" id="WP_003231245.1">
    <property type="nucleotide sequence ID" value="NZ_OZ025638.1"/>
</dbReference>
<dbReference type="FunCoup" id="O31848">
    <property type="interactions" value="19"/>
</dbReference>
<dbReference type="STRING" id="224308.BSU19300"/>
<dbReference type="jPOST" id="O31848"/>
<dbReference type="PaxDb" id="224308-BSU19300"/>
<dbReference type="EnsemblBacteria" id="CAB13822">
    <property type="protein sequence ID" value="CAB13822"/>
    <property type="gene ID" value="BSU_19300"/>
</dbReference>
<dbReference type="GeneID" id="939998"/>
<dbReference type="KEGG" id="bsu:BSU19300"/>
<dbReference type="PATRIC" id="fig|224308.179.peg.2111"/>
<dbReference type="eggNOG" id="ENOG5032YU3">
    <property type="taxonomic scope" value="Bacteria"/>
</dbReference>
<dbReference type="InParanoid" id="O31848"/>
<dbReference type="OrthoDB" id="2428356at2"/>
<dbReference type="PhylomeDB" id="O31848"/>
<dbReference type="BioCyc" id="BSUB:BSU19300-MONOMER"/>
<dbReference type="Proteomes" id="UP000001570">
    <property type="component" value="Chromosome"/>
</dbReference>
<dbReference type="InterPro" id="IPR045447">
    <property type="entry name" value="DUF6501"/>
</dbReference>
<dbReference type="Pfam" id="PF20111">
    <property type="entry name" value="DUF6501"/>
    <property type="match status" value="1"/>
</dbReference>
<keyword id="KW-1185">Reference proteome</keyword>
<accession>O31848</accession>
<feature type="chain" id="PRO_0000372601" description="Uncharacterized protein YozC">
    <location>
        <begin position="1"/>
        <end position="67"/>
    </location>
</feature>
<protein>
    <recommendedName>
        <fullName>Uncharacterized protein YozC</fullName>
    </recommendedName>
</protein>
<sequence length="67" mass="8066">MIHKNWLEKETIKKVKCVQTNAKKYIVNRVLTPGKEYEVKNETEEFLFVVDNTNKVGGYYKEYFEEM</sequence>
<reference key="1">
    <citation type="journal article" date="1997" name="Nature">
        <title>The complete genome sequence of the Gram-positive bacterium Bacillus subtilis.</title>
        <authorList>
            <person name="Kunst F."/>
            <person name="Ogasawara N."/>
            <person name="Moszer I."/>
            <person name="Albertini A.M."/>
            <person name="Alloni G."/>
            <person name="Azevedo V."/>
            <person name="Bertero M.G."/>
            <person name="Bessieres P."/>
            <person name="Bolotin A."/>
            <person name="Borchert S."/>
            <person name="Borriss R."/>
            <person name="Boursier L."/>
            <person name="Brans A."/>
            <person name="Braun M."/>
            <person name="Brignell S.C."/>
            <person name="Bron S."/>
            <person name="Brouillet S."/>
            <person name="Bruschi C.V."/>
            <person name="Caldwell B."/>
            <person name="Capuano V."/>
            <person name="Carter N.M."/>
            <person name="Choi S.-K."/>
            <person name="Codani J.-J."/>
            <person name="Connerton I.F."/>
            <person name="Cummings N.J."/>
            <person name="Daniel R.A."/>
            <person name="Denizot F."/>
            <person name="Devine K.M."/>
            <person name="Duesterhoeft A."/>
            <person name="Ehrlich S.D."/>
            <person name="Emmerson P.T."/>
            <person name="Entian K.-D."/>
            <person name="Errington J."/>
            <person name="Fabret C."/>
            <person name="Ferrari E."/>
            <person name="Foulger D."/>
            <person name="Fritz C."/>
            <person name="Fujita M."/>
            <person name="Fujita Y."/>
            <person name="Fuma S."/>
            <person name="Galizzi A."/>
            <person name="Galleron N."/>
            <person name="Ghim S.-Y."/>
            <person name="Glaser P."/>
            <person name="Goffeau A."/>
            <person name="Golightly E.J."/>
            <person name="Grandi G."/>
            <person name="Guiseppi G."/>
            <person name="Guy B.J."/>
            <person name="Haga K."/>
            <person name="Haiech J."/>
            <person name="Harwood C.R."/>
            <person name="Henaut A."/>
            <person name="Hilbert H."/>
            <person name="Holsappel S."/>
            <person name="Hosono S."/>
            <person name="Hullo M.-F."/>
            <person name="Itaya M."/>
            <person name="Jones L.-M."/>
            <person name="Joris B."/>
            <person name="Karamata D."/>
            <person name="Kasahara Y."/>
            <person name="Klaerr-Blanchard M."/>
            <person name="Klein C."/>
            <person name="Kobayashi Y."/>
            <person name="Koetter P."/>
            <person name="Koningstein G."/>
            <person name="Krogh S."/>
            <person name="Kumano M."/>
            <person name="Kurita K."/>
            <person name="Lapidus A."/>
            <person name="Lardinois S."/>
            <person name="Lauber J."/>
            <person name="Lazarevic V."/>
            <person name="Lee S.-M."/>
            <person name="Levine A."/>
            <person name="Liu H."/>
            <person name="Masuda S."/>
            <person name="Mauel C."/>
            <person name="Medigue C."/>
            <person name="Medina N."/>
            <person name="Mellado R.P."/>
            <person name="Mizuno M."/>
            <person name="Moestl D."/>
            <person name="Nakai S."/>
            <person name="Noback M."/>
            <person name="Noone D."/>
            <person name="O'Reilly M."/>
            <person name="Ogawa K."/>
            <person name="Ogiwara A."/>
            <person name="Oudega B."/>
            <person name="Park S.-H."/>
            <person name="Parro V."/>
            <person name="Pohl T.M."/>
            <person name="Portetelle D."/>
            <person name="Porwollik S."/>
            <person name="Prescott A.M."/>
            <person name="Presecan E."/>
            <person name="Pujic P."/>
            <person name="Purnelle B."/>
            <person name="Rapoport G."/>
            <person name="Rey M."/>
            <person name="Reynolds S."/>
            <person name="Rieger M."/>
            <person name="Rivolta C."/>
            <person name="Rocha E."/>
            <person name="Roche B."/>
            <person name="Rose M."/>
            <person name="Sadaie Y."/>
            <person name="Sato T."/>
            <person name="Scanlan E."/>
            <person name="Schleich S."/>
            <person name="Schroeter R."/>
            <person name="Scoffone F."/>
            <person name="Sekiguchi J."/>
            <person name="Sekowska A."/>
            <person name="Seror S.J."/>
            <person name="Serror P."/>
            <person name="Shin B.-S."/>
            <person name="Soldo B."/>
            <person name="Sorokin A."/>
            <person name="Tacconi E."/>
            <person name="Takagi T."/>
            <person name="Takahashi H."/>
            <person name="Takemaru K."/>
            <person name="Takeuchi M."/>
            <person name="Tamakoshi A."/>
            <person name="Tanaka T."/>
            <person name="Terpstra P."/>
            <person name="Tognoni A."/>
            <person name="Tosato V."/>
            <person name="Uchiyama S."/>
            <person name="Vandenbol M."/>
            <person name="Vannier F."/>
            <person name="Vassarotti A."/>
            <person name="Viari A."/>
            <person name="Wambutt R."/>
            <person name="Wedler E."/>
            <person name="Wedler H."/>
            <person name="Weitzenegger T."/>
            <person name="Winters P."/>
            <person name="Wipat A."/>
            <person name="Yamamoto H."/>
            <person name="Yamane K."/>
            <person name="Yasumoto K."/>
            <person name="Yata K."/>
            <person name="Yoshida K."/>
            <person name="Yoshikawa H.-F."/>
            <person name="Zumstein E."/>
            <person name="Yoshikawa H."/>
            <person name="Danchin A."/>
        </authorList>
    </citation>
    <scope>NUCLEOTIDE SEQUENCE [LARGE SCALE GENOMIC DNA]</scope>
    <source>
        <strain>168</strain>
    </source>
</reference>
<name>YOZC_BACSU</name>
<gene>
    <name type="primary">yozC</name>
    <name type="ordered locus">BSU19300</name>
</gene>
<proteinExistence type="predicted"/>